<evidence type="ECO:0000250" key="1">
    <source>
        <dbReference type="UniProtKB" id="P43033"/>
    </source>
</evidence>
<evidence type="ECO:0000250" key="2">
    <source>
        <dbReference type="UniProtKB" id="P43034"/>
    </source>
</evidence>
<evidence type="ECO:0000250" key="3">
    <source>
        <dbReference type="UniProtKB" id="P63005"/>
    </source>
</evidence>
<evidence type="ECO:0000250" key="4">
    <source>
        <dbReference type="UniProtKB" id="P68402"/>
    </source>
</evidence>
<evidence type="ECO:0000250" key="5">
    <source>
        <dbReference type="UniProtKB" id="Q15102"/>
    </source>
</evidence>
<evidence type="ECO:0000250" key="6">
    <source>
        <dbReference type="UniProtKB" id="Q29460"/>
    </source>
</evidence>
<evidence type="ECO:0000255" key="7">
    <source>
        <dbReference type="HAMAP-Rule" id="MF_03141"/>
    </source>
</evidence>
<evidence type="ECO:0000305" key="8"/>
<evidence type="ECO:0000312" key="9">
    <source>
        <dbReference type="EMBL" id="ABY76308.1"/>
    </source>
</evidence>
<gene>
    <name evidence="7 9" type="primary">PAFAH1B1</name>
    <name evidence="7" type="synonym">LIS1</name>
</gene>
<reference key="1">
    <citation type="submission" date="2008-01" db="EMBL/GenBank/DDBJ databases">
        <title>LIS1 cDNA sequence of the domestic cat.</title>
        <authorList>
            <person name="Martin D.R."/>
            <person name="Morrison N.E."/>
            <person name="Cox N.R."/>
        </authorList>
    </citation>
    <scope>NUCLEOTIDE SEQUENCE [MRNA]</scope>
    <source>
        <tissue>Brain</tissue>
    </source>
</reference>
<keyword id="KW-0007">Acetylation</keyword>
<keyword id="KW-0131">Cell cycle</keyword>
<keyword id="KW-0132">Cell division</keyword>
<keyword id="KW-0175">Coiled coil</keyword>
<keyword id="KW-0963">Cytoplasm</keyword>
<keyword id="KW-0206">Cytoskeleton</keyword>
<keyword id="KW-0217">Developmental protein</keyword>
<keyword id="KW-0221">Differentiation</keyword>
<keyword id="KW-0442">Lipid degradation</keyword>
<keyword id="KW-0443">Lipid metabolism</keyword>
<keyword id="KW-0472">Membrane</keyword>
<keyword id="KW-0493">Microtubule</keyword>
<keyword id="KW-0498">Mitosis</keyword>
<keyword id="KW-0524">Neurogenesis</keyword>
<keyword id="KW-0539">Nucleus</keyword>
<keyword id="KW-0597">Phosphoprotein</keyword>
<keyword id="KW-1185">Reference proteome</keyword>
<keyword id="KW-0677">Repeat</keyword>
<keyword id="KW-0813">Transport</keyword>
<keyword id="KW-0853">WD repeat</keyword>
<organism>
    <name type="scientific">Felis catus</name>
    <name type="common">Cat</name>
    <name type="synonym">Felis silvestris catus</name>
    <dbReference type="NCBI Taxonomy" id="9685"/>
    <lineage>
        <taxon>Eukaryota</taxon>
        <taxon>Metazoa</taxon>
        <taxon>Chordata</taxon>
        <taxon>Craniata</taxon>
        <taxon>Vertebrata</taxon>
        <taxon>Euteleostomi</taxon>
        <taxon>Mammalia</taxon>
        <taxon>Eutheria</taxon>
        <taxon>Laurasiatheria</taxon>
        <taxon>Carnivora</taxon>
        <taxon>Feliformia</taxon>
        <taxon>Felidae</taxon>
        <taxon>Felinae</taxon>
        <taxon>Felis</taxon>
    </lineage>
</organism>
<comment type="function">
    <text evidence="1 2 3 7">Regulatory subunit (beta subunit) of the cytosolic type I platelet-activating factor (PAF) acetylhydrolase (PAF-AH (I)), an enzyme that catalyzes the hydrolyze of the acetyl group at the sn-2 position of PAF and its analogs and participates in PAF inactivation. Regulates the PAF-AH (I) activity in a catalytic dimer composition-dependent manner (By similarity). Positively regulates the activity of the minus-end directed microtubule motor protein dynein. May enhance dynein-mediated microtubule sliding by targeting dynein to the microtubule plus end. Required for several dynein- and microtubule-dependent processes such as the maintenance of Golgi integrity, the peripheral transport of microtubule fragments and the coupling of the nucleus and centrosome. Required during brain development for the proliferation of neuronal precursors and the migration of newly formed neurons from the ventricular/subventricular zone toward the cortical plate. Neuronal migration involves a process called nucleokinesis, whereby migrating cells extend an anterior process into which the nucleus subsequently translocates. During nucleokinesis dynein at the nuclear surface may translocate the nucleus towards the centrosome by exerting force on centrosomal microtubules. Also required for proper activation of Rho GTPases and actin polymerization at the leading edge of locomoting cerebellar neurons and postmigratory hippocampal neurons in response to calcium influx triggered via NMDA receptors. May also play a role in other forms of cell locomotion including the migration of fibroblasts during wound healing. Required for dynein recruitment to microtubule plus ends and BICD2-bound cargos. May modulate the Reelin pathway through interaction of the PAF-AH (I) catalytic dimer with VLDLR (By similarity).</text>
</comment>
<comment type="subunit">
    <text evidence="1 2 7">Can self-associate. Component of the cytosolic PAF-AH (I) heterotetrameric enzyme, which is composed of PAFAH1B1 (beta), PAFAH1B2 (alpha2) and PAFAH1B3 (alpha1) subunits. The catalytic activity of the enzyme resides in the alpha1 (PAFAH1B3) and alpha2 (PAFAH1B2) subunits, whereas the beta subunit (PAFAH1B1) has regulatory activity. Trimer formation is not essential for the catalytic activity. Interacts with the catalytic dimer of PAF-AH (I) heterotetrameric enzyme: interacts with PAFAH1B2 homodimer (alpha2/alpha2 homodimer), PAFAH1B3 homodimer (alpha1/alpha1 homodimer) and PAFAH1B2-PAFAH1B3 heterodimer (alpha2/alpha1 heterodimer) (By similarity). Interacts with DCX, dynein, dynactin, IQGAP1, KATNB1, NDE1, NDEL1, NUDC and RSN. Interacts with DISC1, and this interaction is enhanced by NDEL1. Interacts with DAB1 when DAB1 is phosphorylated in response to RELN/reelin signaling. Interacts with INTS13. Interacts with DCDC1.</text>
</comment>
<comment type="subcellular location">
    <subcellularLocation>
        <location evidence="7">Cytoplasm</location>
        <location evidence="7">Cytoskeleton</location>
    </subcellularLocation>
    <subcellularLocation>
        <location evidence="7">Cytoplasm</location>
        <location evidence="7">Cytoskeleton</location>
        <location evidence="7">Microtubule organizing center</location>
        <location evidence="7">Centrosome</location>
    </subcellularLocation>
    <subcellularLocation>
        <location evidence="7">Cytoplasm</location>
        <location evidence="7">Cytoskeleton</location>
        <location evidence="7">Spindle</location>
    </subcellularLocation>
    <subcellularLocation>
        <location evidence="7">Nucleus membrane</location>
    </subcellularLocation>
    <text evidence="7">Localizes to the plus end of microtubules and to the centrosome. May localize to the nuclear membrane. Redistributes to axons during neuronal development. Also localizes to the microtubules of the manchette in elongating spermatids and to the meiotic spindle in spermatocytes.</text>
</comment>
<comment type="domain">
    <text evidence="7">Dimerization mediated by the LisH domain may be required to activate dynein.</text>
</comment>
<comment type="miscellaneous">
    <text evidence="2 4 5 6">Originally the subunits of the type I platelet-activating factor (PAF) acetylhydrolase was named alpha (PAFAH1B1), beta (PAFAH1B2) and gamma (PAFAH1B3) (By similarity). Now these subunits have been renamed beta (PAFAH1B1), alpha2 (PAFAH1B2) and alpha1 (PAFAH1B3) respectively (By similarity).</text>
</comment>
<comment type="similarity">
    <text evidence="7">Belongs to the WD repeat LIS1/nudF family.</text>
</comment>
<accession>B0LSW3</accession>
<dbReference type="EMBL" id="EU371400">
    <property type="protein sequence ID" value="ABY76308.1"/>
    <property type="molecule type" value="mRNA"/>
</dbReference>
<dbReference type="RefSeq" id="NP_001107812.1">
    <property type="nucleotide sequence ID" value="NM_001114340.1"/>
</dbReference>
<dbReference type="RefSeq" id="XP_006939996.1">
    <property type="nucleotide sequence ID" value="XM_006939934.5"/>
</dbReference>
<dbReference type="RefSeq" id="XP_023099168.1">
    <property type="nucleotide sequence ID" value="XM_023243400.2"/>
</dbReference>
<dbReference type="RefSeq" id="XP_044899911.1">
    <property type="nucleotide sequence ID" value="XM_045043976.1"/>
</dbReference>
<dbReference type="SMR" id="B0LSW3"/>
<dbReference type="STRING" id="9685.ENSFCAP00000025819"/>
<dbReference type="PaxDb" id="9685-ENSFCAP00000017777"/>
<dbReference type="Ensembl" id="ENSFCAT00000041779.3">
    <property type="protein sequence ID" value="ENSFCAP00000025819.2"/>
    <property type="gene ID" value="ENSFCAG00000023725.4"/>
</dbReference>
<dbReference type="GeneID" id="100135766"/>
<dbReference type="KEGG" id="fca:100135766"/>
<dbReference type="CTD" id="5048"/>
<dbReference type="VGNC" id="VGNC:68684">
    <property type="gene designation" value="PAFAH1B1"/>
</dbReference>
<dbReference type="eggNOG" id="KOG0295">
    <property type="taxonomic scope" value="Eukaryota"/>
</dbReference>
<dbReference type="GeneTree" id="ENSGT00940000155039"/>
<dbReference type="HOGENOM" id="CLU_000288_57_15_1"/>
<dbReference type="InParanoid" id="B0LSW3"/>
<dbReference type="OMA" id="WHVATKE"/>
<dbReference type="OrthoDB" id="674604at2759"/>
<dbReference type="Proteomes" id="UP000011712">
    <property type="component" value="Chromosome E1"/>
</dbReference>
<dbReference type="Bgee" id="ENSFCAG00000023725">
    <property type="expression patterns" value="Expressed in testis and 9 other cell types or tissues"/>
</dbReference>
<dbReference type="GO" id="GO:0008247">
    <property type="term" value="C:1-alkyl-2-acetylglycerophosphocholine esterase complex"/>
    <property type="evidence" value="ECO:0000250"/>
    <property type="project" value="UniProtKB"/>
</dbReference>
<dbReference type="GO" id="GO:0000235">
    <property type="term" value="C:astral microtubule"/>
    <property type="evidence" value="ECO:0007669"/>
    <property type="project" value="Ensembl"/>
</dbReference>
<dbReference type="GO" id="GO:1904115">
    <property type="term" value="C:axon cytoplasm"/>
    <property type="evidence" value="ECO:0007669"/>
    <property type="project" value="GOC"/>
</dbReference>
<dbReference type="GO" id="GO:0005938">
    <property type="term" value="C:cell cortex"/>
    <property type="evidence" value="ECO:0007669"/>
    <property type="project" value="Ensembl"/>
</dbReference>
<dbReference type="GO" id="GO:0031252">
    <property type="term" value="C:cell leading edge"/>
    <property type="evidence" value="ECO:0007669"/>
    <property type="project" value="Ensembl"/>
</dbReference>
<dbReference type="GO" id="GO:0005813">
    <property type="term" value="C:centrosome"/>
    <property type="evidence" value="ECO:0007669"/>
    <property type="project" value="UniProtKB-SubCell"/>
</dbReference>
<dbReference type="GO" id="GO:0005881">
    <property type="term" value="C:cytoplasmic microtubule"/>
    <property type="evidence" value="ECO:0000318"/>
    <property type="project" value="GO_Central"/>
</dbReference>
<dbReference type="GO" id="GO:0098978">
    <property type="term" value="C:glutamatergic synapse"/>
    <property type="evidence" value="ECO:0007669"/>
    <property type="project" value="Ensembl"/>
</dbReference>
<dbReference type="GO" id="GO:0000776">
    <property type="term" value="C:kinetochore"/>
    <property type="evidence" value="ECO:0000318"/>
    <property type="project" value="GO_Central"/>
</dbReference>
<dbReference type="GO" id="GO:0005875">
    <property type="term" value="C:microtubule associated complex"/>
    <property type="evidence" value="ECO:0000318"/>
    <property type="project" value="GO_Central"/>
</dbReference>
<dbReference type="GO" id="GO:0031514">
    <property type="term" value="C:motile cilium"/>
    <property type="evidence" value="ECO:0007669"/>
    <property type="project" value="Ensembl"/>
</dbReference>
<dbReference type="GO" id="GO:0043005">
    <property type="term" value="C:neuron projection"/>
    <property type="evidence" value="ECO:0000318"/>
    <property type="project" value="GO_Central"/>
</dbReference>
<dbReference type="GO" id="GO:0043025">
    <property type="term" value="C:neuronal cell body"/>
    <property type="evidence" value="ECO:0000318"/>
    <property type="project" value="GO_Central"/>
</dbReference>
<dbReference type="GO" id="GO:0005635">
    <property type="term" value="C:nuclear envelope"/>
    <property type="evidence" value="ECO:0000318"/>
    <property type="project" value="GO_Central"/>
</dbReference>
<dbReference type="GO" id="GO:0031965">
    <property type="term" value="C:nuclear membrane"/>
    <property type="evidence" value="ECO:0007669"/>
    <property type="project" value="UniProtKB-SubCell"/>
</dbReference>
<dbReference type="GO" id="GO:0048471">
    <property type="term" value="C:perinuclear region of cytoplasm"/>
    <property type="evidence" value="ECO:0007669"/>
    <property type="project" value="Ensembl"/>
</dbReference>
<dbReference type="GO" id="GO:0098685">
    <property type="term" value="C:Schaffer collateral - CA1 synapse"/>
    <property type="evidence" value="ECO:0007669"/>
    <property type="project" value="Ensembl"/>
</dbReference>
<dbReference type="GO" id="GO:0032420">
    <property type="term" value="C:stereocilium"/>
    <property type="evidence" value="ECO:0007669"/>
    <property type="project" value="Ensembl"/>
</dbReference>
<dbReference type="GO" id="GO:0070840">
    <property type="term" value="F:dynein complex binding"/>
    <property type="evidence" value="ECO:0000318"/>
    <property type="project" value="GO_Central"/>
</dbReference>
<dbReference type="GO" id="GO:0042802">
    <property type="term" value="F:identical protein binding"/>
    <property type="evidence" value="ECO:0007669"/>
    <property type="project" value="Ensembl"/>
</dbReference>
<dbReference type="GO" id="GO:0051010">
    <property type="term" value="F:microtubule plus-end binding"/>
    <property type="evidence" value="ECO:0000318"/>
    <property type="project" value="GO_Central"/>
</dbReference>
<dbReference type="GO" id="GO:0051219">
    <property type="term" value="F:phosphoprotein binding"/>
    <property type="evidence" value="ECO:0007669"/>
    <property type="project" value="Ensembl"/>
</dbReference>
<dbReference type="GO" id="GO:0046982">
    <property type="term" value="F:protein heterodimerization activity"/>
    <property type="evidence" value="ECO:0000250"/>
    <property type="project" value="UniProtKB"/>
</dbReference>
<dbReference type="GO" id="GO:0001675">
    <property type="term" value="P:acrosome assembly"/>
    <property type="evidence" value="ECO:0007669"/>
    <property type="project" value="Ensembl"/>
</dbReference>
<dbReference type="GO" id="GO:0030036">
    <property type="term" value="P:actin cytoskeleton organization"/>
    <property type="evidence" value="ECO:0007669"/>
    <property type="project" value="Ensembl"/>
</dbReference>
<dbReference type="GO" id="GO:0008344">
    <property type="term" value="P:adult locomotory behavior"/>
    <property type="evidence" value="ECO:0007669"/>
    <property type="project" value="Ensembl"/>
</dbReference>
<dbReference type="GO" id="GO:0001667">
    <property type="term" value="P:ameboidal-type cell migration"/>
    <property type="evidence" value="ECO:0007669"/>
    <property type="project" value="Ensembl"/>
</dbReference>
<dbReference type="GO" id="GO:0060117">
    <property type="term" value="P:auditory receptor cell development"/>
    <property type="evidence" value="ECO:0007669"/>
    <property type="project" value="Ensembl"/>
</dbReference>
<dbReference type="GO" id="GO:0048854">
    <property type="term" value="P:brain morphogenesis"/>
    <property type="evidence" value="ECO:0000318"/>
    <property type="project" value="GO_Central"/>
</dbReference>
<dbReference type="GO" id="GO:0051301">
    <property type="term" value="P:cell division"/>
    <property type="evidence" value="ECO:0007669"/>
    <property type="project" value="UniProtKB-KW"/>
</dbReference>
<dbReference type="GO" id="GO:0007268">
    <property type="term" value="P:chemical synaptic transmission"/>
    <property type="evidence" value="ECO:0007669"/>
    <property type="project" value="Ensembl"/>
</dbReference>
<dbReference type="GO" id="GO:0090102">
    <property type="term" value="P:cochlea development"/>
    <property type="evidence" value="ECO:0007669"/>
    <property type="project" value="Ensembl"/>
</dbReference>
<dbReference type="GO" id="GO:0021540">
    <property type="term" value="P:corpus callosum morphogenesis"/>
    <property type="evidence" value="ECO:0007669"/>
    <property type="project" value="Ensembl"/>
</dbReference>
<dbReference type="GO" id="GO:0043622">
    <property type="term" value="P:cortical microtubule organization"/>
    <property type="evidence" value="ECO:0007669"/>
    <property type="project" value="Ensembl"/>
</dbReference>
<dbReference type="GO" id="GO:0000132">
    <property type="term" value="P:establishment of mitotic spindle orientation"/>
    <property type="evidence" value="ECO:0000318"/>
    <property type="project" value="GO_Central"/>
</dbReference>
<dbReference type="GO" id="GO:0042249">
    <property type="term" value="P:establishment of planar polarity of embryonic epithelium"/>
    <property type="evidence" value="ECO:0007669"/>
    <property type="project" value="Ensembl"/>
</dbReference>
<dbReference type="GO" id="GO:0007281">
    <property type="term" value="P:germ cell development"/>
    <property type="evidence" value="ECO:0000318"/>
    <property type="project" value="GO_Central"/>
</dbReference>
<dbReference type="GO" id="GO:0021766">
    <property type="term" value="P:hippocampus development"/>
    <property type="evidence" value="ECO:0007669"/>
    <property type="project" value="Ensembl"/>
</dbReference>
<dbReference type="GO" id="GO:1904936">
    <property type="term" value="P:interneuron migration"/>
    <property type="evidence" value="ECO:0007669"/>
    <property type="project" value="Ensembl"/>
</dbReference>
<dbReference type="GO" id="GO:0007254">
    <property type="term" value="P:JNK cascade"/>
    <property type="evidence" value="ECO:0007669"/>
    <property type="project" value="Ensembl"/>
</dbReference>
<dbReference type="GO" id="GO:0021819">
    <property type="term" value="P:layer formation in cerebral cortex"/>
    <property type="evidence" value="ECO:0007669"/>
    <property type="project" value="Ensembl"/>
</dbReference>
<dbReference type="GO" id="GO:0007611">
    <property type="term" value="P:learning or memory"/>
    <property type="evidence" value="ECO:0007669"/>
    <property type="project" value="Ensembl"/>
</dbReference>
<dbReference type="GO" id="GO:0016042">
    <property type="term" value="P:lipid catabolic process"/>
    <property type="evidence" value="ECO:0007669"/>
    <property type="project" value="UniProtKB-KW"/>
</dbReference>
<dbReference type="GO" id="GO:0051661">
    <property type="term" value="P:maintenance of centrosome location"/>
    <property type="evidence" value="ECO:0007669"/>
    <property type="project" value="Ensembl"/>
</dbReference>
<dbReference type="GO" id="GO:0090176">
    <property type="term" value="P:microtubule cytoskeleton organization involved in establishment of planar polarity"/>
    <property type="evidence" value="ECO:0007669"/>
    <property type="project" value="Ensembl"/>
</dbReference>
<dbReference type="GO" id="GO:0031023">
    <property type="term" value="P:microtubule organizing center organization"/>
    <property type="evidence" value="ECO:0000318"/>
    <property type="project" value="GO_Central"/>
</dbReference>
<dbReference type="GO" id="GO:0051012">
    <property type="term" value="P:microtubule sliding"/>
    <property type="evidence" value="ECO:0007669"/>
    <property type="project" value="UniProtKB-UniRule"/>
</dbReference>
<dbReference type="GO" id="GO:0050804">
    <property type="term" value="P:modulation of chemical synaptic transmission"/>
    <property type="evidence" value="ECO:0007669"/>
    <property type="project" value="Ensembl"/>
</dbReference>
<dbReference type="GO" id="GO:0097529">
    <property type="term" value="P:myeloid leukocyte migration"/>
    <property type="evidence" value="ECO:0007669"/>
    <property type="project" value="Ensembl"/>
</dbReference>
<dbReference type="GO" id="GO:0046329">
    <property type="term" value="P:negative regulation of JNK cascade"/>
    <property type="evidence" value="ECO:0007669"/>
    <property type="project" value="Ensembl"/>
</dbReference>
<dbReference type="GO" id="GO:0007405">
    <property type="term" value="P:neuroblast proliferation"/>
    <property type="evidence" value="ECO:0007669"/>
    <property type="project" value="Ensembl"/>
</dbReference>
<dbReference type="GO" id="GO:0050885">
    <property type="term" value="P:neuromuscular process controlling balance"/>
    <property type="evidence" value="ECO:0007669"/>
    <property type="project" value="Ensembl"/>
</dbReference>
<dbReference type="GO" id="GO:0051081">
    <property type="term" value="P:nuclear membrane disassembly"/>
    <property type="evidence" value="ECO:0007669"/>
    <property type="project" value="Ensembl"/>
</dbReference>
<dbReference type="GO" id="GO:0007097">
    <property type="term" value="P:nuclear migration"/>
    <property type="evidence" value="ECO:0000318"/>
    <property type="project" value="GO_Central"/>
</dbReference>
<dbReference type="GO" id="GO:0036035">
    <property type="term" value="P:osteoclast development"/>
    <property type="evidence" value="ECO:0007669"/>
    <property type="project" value="Ensembl"/>
</dbReference>
<dbReference type="GO" id="GO:0001961">
    <property type="term" value="P:positive regulation of cytokine-mediated signaling pathway"/>
    <property type="evidence" value="ECO:0007669"/>
    <property type="project" value="Ensembl"/>
</dbReference>
<dbReference type="GO" id="GO:0061003">
    <property type="term" value="P:positive regulation of dendritic spine morphogenesis"/>
    <property type="evidence" value="ECO:0007669"/>
    <property type="project" value="Ensembl"/>
</dbReference>
<dbReference type="GO" id="GO:0040019">
    <property type="term" value="P:positive regulation of embryonic development"/>
    <property type="evidence" value="ECO:0007669"/>
    <property type="project" value="Ensembl"/>
</dbReference>
<dbReference type="GO" id="GO:0009306">
    <property type="term" value="P:protein secretion"/>
    <property type="evidence" value="ECO:0007669"/>
    <property type="project" value="Ensembl"/>
</dbReference>
<dbReference type="GO" id="GO:0140650">
    <property type="term" value="P:radial glia-guided pyramidal neuron migration"/>
    <property type="evidence" value="ECO:0007669"/>
    <property type="project" value="Ensembl"/>
</dbReference>
<dbReference type="GO" id="GO:0038026">
    <property type="term" value="P:reelin-mediated signaling pathway"/>
    <property type="evidence" value="ECO:0000250"/>
    <property type="project" value="UniProtKB"/>
</dbReference>
<dbReference type="GO" id="GO:0070507">
    <property type="term" value="P:regulation of microtubule cytoskeleton organization"/>
    <property type="evidence" value="ECO:0007669"/>
    <property type="project" value="Ensembl"/>
</dbReference>
<dbReference type="GO" id="GO:0008090">
    <property type="term" value="P:retrograde axonal transport"/>
    <property type="evidence" value="ECO:0000318"/>
    <property type="project" value="GO_Central"/>
</dbReference>
<dbReference type="GO" id="GO:0019226">
    <property type="term" value="P:transmission of nerve impulse"/>
    <property type="evidence" value="ECO:0007669"/>
    <property type="project" value="Ensembl"/>
</dbReference>
<dbReference type="GO" id="GO:0047496">
    <property type="term" value="P:vesicle transport along microtubule"/>
    <property type="evidence" value="ECO:0000318"/>
    <property type="project" value="GO_Central"/>
</dbReference>
<dbReference type="CDD" id="cd00200">
    <property type="entry name" value="WD40"/>
    <property type="match status" value="1"/>
</dbReference>
<dbReference type="FunFam" id="2.130.10.10:FF:000038">
    <property type="entry name" value="Lissencephaly-1 homolog B"/>
    <property type="match status" value="1"/>
</dbReference>
<dbReference type="FunFam" id="1.20.960.30:FF:000002">
    <property type="entry name" value="Platelet-activating factor acetylhydrolase ib"/>
    <property type="match status" value="1"/>
</dbReference>
<dbReference type="Gene3D" id="1.20.960.30">
    <property type="match status" value="1"/>
</dbReference>
<dbReference type="Gene3D" id="2.130.10.10">
    <property type="entry name" value="YVTN repeat-like/Quinoprotein amine dehydrogenase"/>
    <property type="match status" value="1"/>
</dbReference>
<dbReference type="HAMAP" id="MF_03141">
    <property type="entry name" value="lis1"/>
    <property type="match status" value="1"/>
</dbReference>
<dbReference type="InterPro" id="IPR017252">
    <property type="entry name" value="Dynein_regulator_LIS1"/>
</dbReference>
<dbReference type="InterPro" id="IPR020472">
    <property type="entry name" value="G-protein_beta_WD-40_rep"/>
</dbReference>
<dbReference type="InterPro" id="IPR037190">
    <property type="entry name" value="LIS1_N"/>
</dbReference>
<dbReference type="InterPro" id="IPR006594">
    <property type="entry name" value="LisH"/>
</dbReference>
<dbReference type="InterPro" id="IPR056795">
    <property type="entry name" value="PAC1-like_LisH-like_dom"/>
</dbReference>
<dbReference type="InterPro" id="IPR015943">
    <property type="entry name" value="WD40/YVTN_repeat-like_dom_sf"/>
</dbReference>
<dbReference type="InterPro" id="IPR019775">
    <property type="entry name" value="WD40_repeat_CS"/>
</dbReference>
<dbReference type="InterPro" id="IPR036322">
    <property type="entry name" value="WD40_repeat_dom_sf"/>
</dbReference>
<dbReference type="InterPro" id="IPR001680">
    <property type="entry name" value="WD40_rpt"/>
</dbReference>
<dbReference type="InterPro" id="IPR050349">
    <property type="entry name" value="WD_LIS1/nudF_dynein_reg"/>
</dbReference>
<dbReference type="PANTHER" id="PTHR44129">
    <property type="entry name" value="WD REPEAT-CONTAINING PROTEIN POP1"/>
    <property type="match status" value="1"/>
</dbReference>
<dbReference type="Pfam" id="PF24951">
    <property type="entry name" value="LisH_PAC1"/>
    <property type="match status" value="1"/>
</dbReference>
<dbReference type="Pfam" id="PF00400">
    <property type="entry name" value="WD40"/>
    <property type="match status" value="7"/>
</dbReference>
<dbReference type="PIRSF" id="PIRSF037647">
    <property type="entry name" value="Dynein_regulator_Lis1"/>
    <property type="match status" value="1"/>
</dbReference>
<dbReference type="PRINTS" id="PR00320">
    <property type="entry name" value="GPROTEINBRPT"/>
</dbReference>
<dbReference type="SMART" id="SM00667">
    <property type="entry name" value="LisH"/>
    <property type="match status" value="1"/>
</dbReference>
<dbReference type="SMART" id="SM00320">
    <property type="entry name" value="WD40"/>
    <property type="match status" value="7"/>
</dbReference>
<dbReference type="SUPFAM" id="SSF109925">
    <property type="entry name" value="Lissencephaly-1 protein (Lis-1, PAF-AH alpha) N-terminal domain"/>
    <property type="match status" value="1"/>
</dbReference>
<dbReference type="SUPFAM" id="SSF50978">
    <property type="entry name" value="WD40 repeat-like"/>
    <property type="match status" value="1"/>
</dbReference>
<dbReference type="PROSITE" id="PS50896">
    <property type="entry name" value="LISH"/>
    <property type="match status" value="1"/>
</dbReference>
<dbReference type="PROSITE" id="PS00678">
    <property type="entry name" value="WD_REPEATS_1"/>
    <property type="match status" value="4"/>
</dbReference>
<dbReference type="PROSITE" id="PS50082">
    <property type="entry name" value="WD_REPEATS_2"/>
    <property type="match status" value="7"/>
</dbReference>
<dbReference type="PROSITE" id="PS50294">
    <property type="entry name" value="WD_REPEATS_REGION"/>
    <property type="match status" value="1"/>
</dbReference>
<proteinExistence type="evidence at transcript level"/>
<protein>
    <recommendedName>
        <fullName evidence="7 8">Platelet-activating factor acetylhydrolase IB subunit beta</fullName>
    </recommendedName>
    <alternativeName>
        <fullName evidence="7">Lissencephaly-1 protein</fullName>
        <shortName evidence="7">LIS-1</shortName>
    </alternativeName>
    <alternativeName>
        <fullName evidence="7">PAF acetylhydrolase 45 kDa subunit</fullName>
        <shortName evidence="7">PAF-AH 45 kDa subunit</shortName>
    </alternativeName>
    <alternativeName>
        <fullName evidence="7">PAF-AH alpha</fullName>
        <shortName evidence="7">PAFAH alpha</shortName>
    </alternativeName>
</protein>
<name>LIS1_FELCA</name>
<feature type="chain" id="PRO_0000405034" description="Platelet-activating factor acetylhydrolase IB subunit beta">
    <location>
        <begin position="1"/>
        <end position="410"/>
    </location>
</feature>
<feature type="domain" description="LisH" evidence="7">
    <location>
        <begin position="7"/>
        <end position="39"/>
    </location>
</feature>
<feature type="repeat" description="WD 1">
    <location>
        <begin position="106"/>
        <end position="147"/>
    </location>
</feature>
<feature type="repeat" description="WD 2">
    <location>
        <begin position="148"/>
        <end position="187"/>
    </location>
</feature>
<feature type="repeat" description="WD 3">
    <location>
        <begin position="190"/>
        <end position="229"/>
    </location>
</feature>
<feature type="repeat" description="WD 4">
    <location>
        <begin position="232"/>
        <end position="271"/>
    </location>
</feature>
<feature type="repeat" description="WD 5">
    <location>
        <begin position="274"/>
        <end position="333"/>
    </location>
</feature>
<feature type="repeat" description="WD 6">
    <location>
        <begin position="336"/>
        <end position="377"/>
    </location>
</feature>
<feature type="repeat" description="WD 7">
    <location>
        <begin position="378"/>
        <end position="410"/>
    </location>
</feature>
<feature type="region of interest" description="Interaction with NDEL1" evidence="7">
    <location>
        <begin position="1"/>
        <end position="102"/>
    </location>
</feature>
<feature type="region of interest" description="Interaction with NDE1" evidence="7">
    <location>
        <begin position="1"/>
        <end position="66"/>
    </location>
</feature>
<feature type="region of interest" description="Required for self-association and interaction with PAFAH1B2 and PAFAH1B3" evidence="7">
    <location>
        <begin position="1"/>
        <end position="38"/>
    </location>
</feature>
<feature type="region of interest" description="Interaction with dynein and dynactin" evidence="7">
    <location>
        <begin position="83"/>
        <end position="410"/>
    </location>
</feature>
<feature type="region of interest" description="Interaction with DCX" evidence="7">
    <location>
        <begin position="367"/>
        <end position="409"/>
    </location>
</feature>
<feature type="region of interest" description="Interaction with NDEL1" evidence="7">
    <location>
        <begin position="388"/>
        <end position="410"/>
    </location>
</feature>
<feature type="coiled-coil region" evidence="7">
    <location>
        <begin position="56"/>
        <end position="82"/>
    </location>
</feature>
<feature type="modified residue" description="N6-acetyllysine" evidence="2">
    <location>
        <position position="53"/>
    </location>
</feature>
<feature type="modified residue" description="Phosphoserine" evidence="2">
    <location>
        <position position="109"/>
    </location>
</feature>
<sequence>MVLSQRQRDELNRAIADYLRSNGYEEAYSVFKKEAELDMNEELDKKYAGLLEKKWTSVIRLQKKVMELESKLNEAKEEFTSGGPLGQKRDPKEWIPRPPEKYALSGHRSPVTRVIFHPVFSVMVSASEDATIKVWDYETGDFERTLKGHTDSVQDISFDHSGKLLASCSADMTIKLWDFQGFECIRTMHGHDHNVSSVAIMPNGDHIVSASRDKTIKMWEVQTGYCVKTFTGHREWVRMVRPNQDGTLIASCSNDQTVRVWVVATKECKAELREHEHVVECISWAPESSYSSISEATGSETKKSGKPGPFLLSGSRDKTIKMWDVSTGMCLMTLVGHDNWVRGVLFHSGGKFILSCADDKTLRVWDYKNKRCMKTLNAHEHFVTSLDFHKTAPYVVTGSVDQTVKVWECR</sequence>